<organism>
    <name type="scientific">Mus musculus</name>
    <name type="common">Mouse</name>
    <dbReference type="NCBI Taxonomy" id="10090"/>
    <lineage>
        <taxon>Eukaryota</taxon>
        <taxon>Metazoa</taxon>
        <taxon>Chordata</taxon>
        <taxon>Craniata</taxon>
        <taxon>Vertebrata</taxon>
        <taxon>Euteleostomi</taxon>
        <taxon>Mammalia</taxon>
        <taxon>Eutheria</taxon>
        <taxon>Euarchontoglires</taxon>
        <taxon>Glires</taxon>
        <taxon>Rodentia</taxon>
        <taxon>Myomorpha</taxon>
        <taxon>Muroidea</taxon>
        <taxon>Muridae</taxon>
        <taxon>Murinae</taxon>
        <taxon>Mus</taxon>
        <taxon>Mus</taxon>
    </lineage>
</organism>
<protein>
    <recommendedName>
        <fullName>Procollagen galactosyltransferase 2</fullName>
        <ecNumber evidence="1">2.4.1.50</ecNumber>
    </recommendedName>
    <alternativeName>
        <fullName>Collagen beta(1-O)galactosyltransferase 2</fullName>
    </alternativeName>
    <alternativeName>
        <fullName>Glycosyltransferase 25 family member 2</fullName>
    </alternativeName>
    <alternativeName>
        <fullName>Hydroxylysine galactosyltransferase 2</fullName>
    </alternativeName>
</protein>
<comment type="function">
    <text evidence="1">Beta-galactosyltransferase that transfers beta-galactose to hydroxylysine residues of collagen.</text>
</comment>
<comment type="catalytic activity">
    <reaction evidence="1">
        <text>(5R)-5-hydroxy-L-lysyl-[collagen] + UDP-alpha-D-galactose = (5R)-5-O-(beta-D-galactosyl)-5-hydroxy-L-lysyl-[collagen] + UDP + H(+)</text>
        <dbReference type="Rhea" id="RHEA:12637"/>
        <dbReference type="Rhea" id="RHEA-COMP:12752"/>
        <dbReference type="Rhea" id="RHEA-COMP:12753"/>
        <dbReference type="ChEBI" id="CHEBI:15378"/>
        <dbReference type="ChEBI" id="CHEBI:58223"/>
        <dbReference type="ChEBI" id="CHEBI:66914"/>
        <dbReference type="ChEBI" id="CHEBI:133442"/>
        <dbReference type="ChEBI" id="CHEBI:133443"/>
        <dbReference type="EC" id="2.4.1.50"/>
    </reaction>
</comment>
<comment type="subcellular location">
    <subcellularLocation>
        <location evidence="3">Endoplasmic reticulum lumen</location>
    </subcellularLocation>
</comment>
<comment type="similarity">
    <text evidence="5">Belongs to the glycosyltransferase 25 family.</text>
</comment>
<name>GT252_MOUSE</name>
<evidence type="ECO:0000250" key="1">
    <source>
        <dbReference type="UniProtKB" id="Q8IYK4"/>
    </source>
</evidence>
<evidence type="ECO:0000255" key="2"/>
<evidence type="ECO:0000255" key="3">
    <source>
        <dbReference type="PROSITE-ProRule" id="PRU10138"/>
    </source>
</evidence>
<evidence type="ECO:0000256" key="4">
    <source>
        <dbReference type="SAM" id="MobiDB-lite"/>
    </source>
</evidence>
<evidence type="ECO:0000305" key="5"/>
<feature type="signal peptide" evidence="2">
    <location>
        <begin position="1"/>
        <end position="26"/>
    </location>
</feature>
<feature type="chain" id="PRO_0000309542" description="Procollagen galactosyltransferase 2">
    <location>
        <begin position="27"/>
        <end position="625"/>
    </location>
</feature>
<feature type="region of interest" description="Disordered" evidence="4">
    <location>
        <begin position="597"/>
        <end position="625"/>
    </location>
</feature>
<feature type="short sequence motif" description="Prevents secretion from ER" evidence="3">
    <location>
        <begin position="622"/>
        <end position="625"/>
    </location>
</feature>
<feature type="glycosylation site" description="N-linked (GlcNAc...) asparagine" evidence="2">
    <location>
        <position position="96"/>
    </location>
</feature>
<feature type="glycosylation site" description="N-linked (GlcNAc...) asparagine" evidence="2">
    <location>
        <position position="184"/>
    </location>
</feature>
<feature type="glycosylation site" description="N-linked (GlcNAc...) asparagine" evidence="2">
    <location>
        <position position="381"/>
    </location>
</feature>
<feature type="glycosylation site" description="N-linked (GlcNAc...) asparagine" evidence="2">
    <location>
        <position position="579"/>
    </location>
</feature>
<feature type="sequence conflict" description="In Ref. 1; BAC35169." evidence="5" ref="1">
    <original>D</original>
    <variation>G</variation>
    <location>
        <position position="398"/>
    </location>
</feature>
<feature type="sequence conflict" description="In Ref. 2; AAH68118." evidence="5" ref="2">
    <original>L</original>
    <variation>V</variation>
    <location>
        <position position="616"/>
    </location>
</feature>
<gene>
    <name type="primary">Colgalt2</name>
    <name type="synonym">Glt25d2</name>
</gene>
<sequence>MAARLATVACALFLLSSALLRLGCRARFAAEPDSDEDGEETVAFPESPPQKPTVFVVVLARNAAHTLPYFLGCLERLDYPKSRMAIWAATDHNVDNTTEILREWLKSVQRLYHYVEWRPMNEPESYPDEIGPKHWPNSRFSHVMKLRQAALRTAREKWSDYILFIDVDNFLTNPQTLNLMIVENKTIVAPMLESRGLYSNFWCGITPQGFYKRTPDYLQIREWKRMGCFPVPMVHSTFLIDLRKEASDKLAFYPPHQDYTWTFDDIIVFAFSSRQAGIQMYLCNKEHYGYLPIPLKPHQTLQEDVENLIHVQIEAMIDHPPMEPSQFVSVVPKYPDKMGFDEIFMINLKRRKDRRDRMLRTLYEQEIEVKIVEAVDGKALNTSQLKAWNIEMLPGYRDPYSSRPLTRGEIGCFLSHFSVWKEVIDRELEKTLVIEDDVRFEHQFKRKLMKLMEDIDKAQLDWELIYIGRKRMQVKEPEKAVPNVVNLVEADYSYWTLGYAISLEGAQKLVGADPFGKMLPVDEFLPIMYNKHPVAEYKEYYESRDLKAFSAEPLLIYPTHYTGQPGYLSDTETSTIWDNETVATDWDRTHSWKSRKQGHIRSTAKNTEALPPPTSLDTVPSRDEL</sequence>
<accession>Q6NVG7</accession>
<accession>Q8BWD4</accession>
<keyword id="KW-0256">Endoplasmic reticulum</keyword>
<keyword id="KW-0325">Glycoprotein</keyword>
<keyword id="KW-0328">Glycosyltransferase</keyword>
<keyword id="KW-1185">Reference proteome</keyword>
<keyword id="KW-0732">Signal</keyword>
<keyword id="KW-0808">Transferase</keyword>
<reference key="1">
    <citation type="journal article" date="2005" name="Science">
        <title>The transcriptional landscape of the mammalian genome.</title>
        <authorList>
            <person name="Carninci P."/>
            <person name="Kasukawa T."/>
            <person name="Katayama S."/>
            <person name="Gough J."/>
            <person name="Frith M.C."/>
            <person name="Maeda N."/>
            <person name="Oyama R."/>
            <person name="Ravasi T."/>
            <person name="Lenhard B."/>
            <person name="Wells C."/>
            <person name="Kodzius R."/>
            <person name="Shimokawa K."/>
            <person name="Bajic V.B."/>
            <person name="Brenner S.E."/>
            <person name="Batalov S."/>
            <person name="Forrest A.R."/>
            <person name="Zavolan M."/>
            <person name="Davis M.J."/>
            <person name="Wilming L.G."/>
            <person name="Aidinis V."/>
            <person name="Allen J.E."/>
            <person name="Ambesi-Impiombato A."/>
            <person name="Apweiler R."/>
            <person name="Aturaliya R.N."/>
            <person name="Bailey T.L."/>
            <person name="Bansal M."/>
            <person name="Baxter L."/>
            <person name="Beisel K.W."/>
            <person name="Bersano T."/>
            <person name="Bono H."/>
            <person name="Chalk A.M."/>
            <person name="Chiu K.P."/>
            <person name="Choudhary V."/>
            <person name="Christoffels A."/>
            <person name="Clutterbuck D.R."/>
            <person name="Crowe M.L."/>
            <person name="Dalla E."/>
            <person name="Dalrymple B.P."/>
            <person name="de Bono B."/>
            <person name="Della Gatta G."/>
            <person name="di Bernardo D."/>
            <person name="Down T."/>
            <person name="Engstrom P."/>
            <person name="Fagiolini M."/>
            <person name="Faulkner G."/>
            <person name="Fletcher C.F."/>
            <person name="Fukushima T."/>
            <person name="Furuno M."/>
            <person name="Futaki S."/>
            <person name="Gariboldi M."/>
            <person name="Georgii-Hemming P."/>
            <person name="Gingeras T.R."/>
            <person name="Gojobori T."/>
            <person name="Green R.E."/>
            <person name="Gustincich S."/>
            <person name="Harbers M."/>
            <person name="Hayashi Y."/>
            <person name="Hensch T.K."/>
            <person name="Hirokawa N."/>
            <person name="Hill D."/>
            <person name="Huminiecki L."/>
            <person name="Iacono M."/>
            <person name="Ikeo K."/>
            <person name="Iwama A."/>
            <person name="Ishikawa T."/>
            <person name="Jakt M."/>
            <person name="Kanapin A."/>
            <person name="Katoh M."/>
            <person name="Kawasawa Y."/>
            <person name="Kelso J."/>
            <person name="Kitamura H."/>
            <person name="Kitano H."/>
            <person name="Kollias G."/>
            <person name="Krishnan S.P."/>
            <person name="Kruger A."/>
            <person name="Kummerfeld S.K."/>
            <person name="Kurochkin I.V."/>
            <person name="Lareau L.F."/>
            <person name="Lazarevic D."/>
            <person name="Lipovich L."/>
            <person name="Liu J."/>
            <person name="Liuni S."/>
            <person name="McWilliam S."/>
            <person name="Madan Babu M."/>
            <person name="Madera M."/>
            <person name="Marchionni L."/>
            <person name="Matsuda H."/>
            <person name="Matsuzawa S."/>
            <person name="Miki H."/>
            <person name="Mignone F."/>
            <person name="Miyake S."/>
            <person name="Morris K."/>
            <person name="Mottagui-Tabar S."/>
            <person name="Mulder N."/>
            <person name="Nakano N."/>
            <person name="Nakauchi H."/>
            <person name="Ng P."/>
            <person name="Nilsson R."/>
            <person name="Nishiguchi S."/>
            <person name="Nishikawa S."/>
            <person name="Nori F."/>
            <person name="Ohara O."/>
            <person name="Okazaki Y."/>
            <person name="Orlando V."/>
            <person name="Pang K.C."/>
            <person name="Pavan W.J."/>
            <person name="Pavesi G."/>
            <person name="Pesole G."/>
            <person name="Petrovsky N."/>
            <person name="Piazza S."/>
            <person name="Reed J."/>
            <person name="Reid J.F."/>
            <person name="Ring B.Z."/>
            <person name="Ringwald M."/>
            <person name="Rost B."/>
            <person name="Ruan Y."/>
            <person name="Salzberg S.L."/>
            <person name="Sandelin A."/>
            <person name="Schneider C."/>
            <person name="Schoenbach C."/>
            <person name="Sekiguchi K."/>
            <person name="Semple C.A."/>
            <person name="Seno S."/>
            <person name="Sessa L."/>
            <person name="Sheng Y."/>
            <person name="Shibata Y."/>
            <person name="Shimada H."/>
            <person name="Shimada K."/>
            <person name="Silva D."/>
            <person name="Sinclair B."/>
            <person name="Sperling S."/>
            <person name="Stupka E."/>
            <person name="Sugiura K."/>
            <person name="Sultana R."/>
            <person name="Takenaka Y."/>
            <person name="Taki K."/>
            <person name="Tammoja K."/>
            <person name="Tan S.L."/>
            <person name="Tang S."/>
            <person name="Taylor M.S."/>
            <person name="Tegner J."/>
            <person name="Teichmann S.A."/>
            <person name="Ueda H.R."/>
            <person name="van Nimwegen E."/>
            <person name="Verardo R."/>
            <person name="Wei C.L."/>
            <person name="Yagi K."/>
            <person name="Yamanishi H."/>
            <person name="Zabarovsky E."/>
            <person name="Zhu S."/>
            <person name="Zimmer A."/>
            <person name="Hide W."/>
            <person name="Bult C."/>
            <person name="Grimmond S.M."/>
            <person name="Teasdale R.D."/>
            <person name="Liu E.T."/>
            <person name="Brusic V."/>
            <person name="Quackenbush J."/>
            <person name="Wahlestedt C."/>
            <person name="Mattick J.S."/>
            <person name="Hume D.A."/>
            <person name="Kai C."/>
            <person name="Sasaki D."/>
            <person name="Tomaru Y."/>
            <person name="Fukuda S."/>
            <person name="Kanamori-Katayama M."/>
            <person name="Suzuki M."/>
            <person name="Aoki J."/>
            <person name="Arakawa T."/>
            <person name="Iida J."/>
            <person name="Imamura K."/>
            <person name="Itoh M."/>
            <person name="Kato T."/>
            <person name="Kawaji H."/>
            <person name="Kawagashira N."/>
            <person name="Kawashima T."/>
            <person name="Kojima M."/>
            <person name="Kondo S."/>
            <person name="Konno H."/>
            <person name="Nakano K."/>
            <person name="Ninomiya N."/>
            <person name="Nishio T."/>
            <person name="Okada M."/>
            <person name="Plessy C."/>
            <person name="Shibata K."/>
            <person name="Shiraki T."/>
            <person name="Suzuki S."/>
            <person name="Tagami M."/>
            <person name="Waki K."/>
            <person name="Watahiki A."/>
            <person name="Okamura-Oho Y."/>
            <person name="Suzuki H."/>
            <person name="Kawai J."/>
            <person name="Hayashizaki Y."/>
        </authorList>
    </citation>
    <scope>NUCLEOTIDE SEQUENCE [LARGE SCALE MRNA]</scope>
    <source>
        <strain>C57BL/6J</strain>
        <tissue>Mammary gland</tissue>
    </source>
</reference>
<reference key="2">
    <citation type="journal article" date="2004" name="Genome Res.">
        <title>The status, quality, and expansion of the NIH full-length cDNA project: the Mammalian Gene Collection (MGC).</title>
        <authorList>
            <consortium name="The MGC Project Team"/>
        </authorList>
    </citation>
    <scope>NUCLEOTIDE SEQUENCE [LARGE SCALE MRNA]</scope>
    <source>
        <strain>C57BL/6J</strain>
        <tissue>Brain</tissue>
    </source>
</reference>
<proteinExistence type="evidence at transcript level"/>
<dbReference type="EC" id="2.4.1.50" evidence="1"/>
<dbReference type="EMBL" id="AK052838">
    <property type="protein sequence ID" value="BAC35169.1"/>
    <property type="molecule type" value="mRNA"/>
</dbReference>
<dbReference type="EMBL" id="BC068118">
    <property type="protein sequence ID" value="AAH68118.1"/>
    <property type="molecule type" value="mRNA"/>
</dbReference>
<dbReference type="CCDS" id="CCDS15364.1"/>
<dbReference type="RefSeq" id="NP_808424.3">
    <property type="nucleotide sequence ID" value="NM_177756.4"/>
</dbReference>
<dbReference type="SMR" id="Q6NVG7"/>
<dbReference type="BioGRID" id="234612">
    <property type="interactions" value="2"/>
</dbReference>
<dbReference type="FunCoup" id="Q6NVG7">
    <property type="interactions" value="141"/>
</dbReference>
<dbReference type="STRING" id="10090.ENSMUSP00000037532"/>
<dbReference type="CAZy" id="GT25">
    <property type="family name" value="Glycosyltransferase Family 25"/>
</dbReference>
<dbReference type="GlyCosmos" id="Q6NVG7">
    <property type="glycosylation" value="4 sites, No reported glycans"/>
</dbReference>
<dbReference type="GlyGen" id="Q6NVG7">
    <property type="glycosylation" value="4 sites, 1 N-linked glycan (1 site)"/>
</dbReference>
<dbReference type="iPTMnet" id="Q6NVG7"/>
<dbReference type="PhosphoSitePlus" id="Q6NVG7"/>
<dbReference type="PaxDb" id="10090-ENSMUSP00000037532"/>
<dbReference type="ProteomicsDB" id="271110"/>
<dbReference type="Antibodypedia" id="34449">
    <property type="antibodies" value="150 antibodies from 21 providers"/>
</dbReference>
<dbReference type="DNASU" id="269132"/>
<dbReference type="Ensembl" id="ENSMUST00000044311.9">
    <property type="protein sequence ID" value="ENSMUSP00000037532.9"/>
    <property type="gene ID" value="ENSMUSG00000032649.15"/>
</dbReference>
<dbReference type="GeneID" id="269132"/>
<dbReference type="KEGG" id="mmu:269132"/>
<dbReference type="UCSC" id="uc007czg.2">
    <property type="organism name" value="mouse"/>
</dbReference>
<dbReference type="AGR" id="MGI:2138232"/>
<dbReference type="CTD" id="23127"/>
<dbReference type="MGI" id="MGI:2138232">
    <property type="gene designation" value="Colgalt2"/>
</dbReference>
<dbReference type="VEuPathDB" id="HostDB:ENSMUSG00000032649"/>
<dbReference type="eggNOG" id="KOG4179">
    <property type="taxonomic scope" value="Eukaryota"/>
</dbReference>
<dbReference type="GeneTree" id="ENSGT01030000234558"/>
<dbReference type="HOGENOM" id="CLU_024037_2_0_1"/>
<dbReference type="InParanoid" id="Q6NVG7"/>
<dbReference type="OMA" id="QRVYHYV"/>
<dbReference type="OrthoDB" id="47375at2759"/>
<dbReference type="PhylomeDB" id="Q6NVG7"/>
<dbReference type="TreeFam" id="TF313826"/>
<dbReference type="Reactome" id="R-MMU-1650814">
    <property type="pathway name" value="Collagen biosynthesis and modifying enzymes"/>
</dbReference>
<dbReference type="BioGRID-ORCS" id="269132">
    <property type="hits" value="0 hits in 78 CRISPR screens"/>
</dbReference>
<dbReference type="ChiTaRS" id="Colgalt2">
    <property type="organism name" value="mouse"/>
</dbReference>
<dbReference type="PRO" id="PR:Q6NVG7"/>
<dbReference type="Proteomes" id="UP000000589">
    <property type="component" value="Chromosome 1"/>
</dbReference>
<dbReference type="RNAct" id="Q6NVG7">
    <property type="molecule type" value="protein"/>
</dbReference>
<dbReference type="Bgee" id="ENSMUSG00000032649">
    <property type="expression patterns" value="Expressed in otolith organ and 99 other cell types or tissues"/>
</dbReference>
<dbReference type="ExpressionAtlas" id="Q6NVG7">
    <property type="expression patterns" value="baseline and differential"/>
</dbReference>
<dbReference type="GO" id="GO:0005788">
    <property type="term" value="C:endoplasmic reticulum lumen"/>
    <property type="evidence" value="ECO:0007669"/>
    <property type="project" value="UniProtKB-SubCell"/>
</dbReference>
<dbReference type="GO" id="GO:0050211">
    <property type="term" value="F:procollagen galactosyltransferase activity"/>
    <property type="evidence" value="ECO:0007669"/>
    <property type="project" value="UniProtKB-EC"/>
</dbReference>
<dbReference type="CDD" id="cd00761">
    <property type="entry name" value="Glyco_tranf_GTA_type"/>
    <property type="match status" value="1"/>
</dbReference>
<dbReference type="CDD" id="cd06532">
    <property type="entry name" value="Glyco_transf_25"/>
    <property type="match status" value="1"/>
</dbReference>
<dbReference type="FunFam" id="3.90.550.10:FF:000048">
    <property type="entry name" value="Glycosyltransferase 25 family member 1"/>
    <property type="match status" value="1"/>
</dbReference>
<dbReference type="Gene3D" id="3.90.550.10">
    <property type="entry name" value="Spore Coat Polysaccharide Biosynthesis Protein SpsA, Chain A"/>
    <property type="match status" value="1"/>
</dbReference>
<dbReference type="InterPro" id="IPR050757">
    <property type="entry name" value="Collagen_mod_GT25"/>
</dbReference>
<dbReference type="InterPro" id="IPR002654">
    <property type="entry name" value="Glyco_trans_25"/>
</dbReference>
<dbReference type="InterPro" id="IPR029044">
    <property type="entry name" value="Nucleotide-diphossugar_trans"/>
</dbReference>
<dbReference type="PANTHER" id="PTHR10730:SF8">
    <property type="entry name" value="PROCOLLAGEN GALACTOSYLTRANSFERASE 2"/>
    <property type="match status" value="1"/>
</dbReference>
<dbReference type="PANTHER" id="PTHR10730">
    <property type="entry name" value="PROCOLLAGEN-LYSINE,2-OXOGLUTARATE 5-DIOXYGENASE/GLYCOSYLTRANSFERASE 25 FAMILY MEMBER"/>
    <property type="match status" value="1"/>
</dbReference>
<dbReference type="Pfam" id="PF13704">
    <property type="entry name" value="Glyco_tranf_2_4"/>
    <property type="match status" value="1"/>
</dbReference>
<dbReference type="Pfam" id="PF01755">
    <property type="entry name" value="Glyco_transf_25"/>
    <property type="match status" value="1"/>
</dbReference>
<dbReference type="SUPFAM" id="SSF53448">
    <property type="entry name" value="Nucleotide-diphospho-sugar transferases"/>
    <property type="match status" value="1"/>
</dbReference>
<dbReference type="PROSITE" id="PS00014">
    <property type="entry name" value="ER_TARGET"/>
    <property type="match status" value="1"/>
</dbReference>